<dbReference type="EMBL" id="AJ249235">
    <property type="protein sequence ID" value="CAB59009.1"/>
    <property type="status" value="ALT_INIT"/>
    <property type="molecule type" value="Genomic_RNA"/>
</dbReference>
<dbReference type="PIR" id="A53591">
    <property type="entry name" value="A53591"/>
</dbReference>
<dbReference type="SMR" id="Q9QBZ8"/>
<dbReference type="GlyCosmos" id="Q9QBZ8">
    <property type="glycosylation" value="25 sites, No reported glycans"/>
</dbReference>
<dbReference type="ABCD" id="Q9QBZ8">
    <property type="antibodies" value="1 sequenced antibody"/>
</dbReference>
<dbReference type="Proteomes" id="UP000100183">
    <property type="component" value="Segment"/>
</dbReference>
<dbReference type="GO" id="GO:0044175">
    <property type="term" value="C:host cell endosome membrane"/>
    <property type="evidence" value="ECO:0007669"/>
    <property type="project" value="UniProtKB-SubCell"/>
</dbReference>
<dbReference type="GO" id="GO:0020002">
    <property type="term" value="C:host cell plasma membrane"/>
    <property type="evidence" value="ECO:0007669"/>
    <property type="project" value="UniProtKB-SubCell"/>
</dbReference>
<dbReference type="GO" id="GO:0016020">
    <property type="term" value="C:membrane"/>
    <property type="evidence" value="ECO:0007669"/>
    <property type="project" value="UniProtKB-UniRule"/>
</dbReference>
<dbReference type="GO" id="GO:0019031">
    <property type="term" value="C:viral envelope"/>
    <property type="evidence" value="ECO:0007669"/>
    <property type="project" value="UniProtKB-KW"/>
</dbReference>
<dbReference type="GO" id="GO:0055036">
    <property type="term" value="C:virion membrane"/>
    <property type="evidence" value="ECO:0007669"/>
    <property type="project" value="UniProtKB-SubCell"/>
</dbReference>
<dbReference type="GO" id="GO:0005198">
    <property type="term" value="F:structural molecule activity"/>
    <property type="evidence" value="ECO:0007669"/>
    <property type="project" value="UniProtKB-UniRule"/>
</dbReference>
<dbReference type="GO" id="GO:0075512">
    <property type="term" value="P:clathrin-dependent endocytosis of virus by host cell"/>
    <property type="evidence" value="ECO:0007669"/>
    <property type="project" value="UniProtKB-UniRule"/>
</dbReference>
<dbReference type="GO" id="GO:0039654">
    <property type="term" value="P:fusion of virus membrane with host endosome membrane"/>
    <property type="evidence" value="ECO:0007669"/>
    <property type="project" value="UniProtKB-UniRule"/>
</dbReference>
<dbReference type="GO" id="GO:0019064">
    <property type="term" value="P:fusion of virus membrane with host plasma membrane"/>
    <property type="evidence" value="ECO:0007669"/>
    <property type="project" value="UniProtKB-UniRule"/>
</dbReference>
<dbReference type="GO" id="GO:1903908">
    <property type="term" value="P:positive regulation of plasma membrane raft polarization"/>
    <property type="evidence" value="ECO:0007669"/>
    <property type="project" value="UniProtKB-UniRule"/>
</dbReference>
<dbReference type="GO" id="GO:1903911">
    <property type="term" value="P:positive regulation of receptor clustering"/>
    <property type="evidence" value="ECO:0007669"/>
    <property type="project" value="UniProtKB-UniRule"/>
</dbReference>
<dbReference type="GO" id="GO:0019082">
    <property type="term" value="P:viral protein processing"/>
    <property type="evidence" value="ECO:0007669"/>
    <property type="project" value="UniProtKB-UniRule"/>
</dbReference>
<dbReference type="GO" id="GO:0019062">
    <property type="term" value="P:virion attachment to host cell"/>
    <property type="evidence" value="ECO:0007669"/>
    <property type="project" value="UniProtKB-UniRule"/>
</dbReference>
<dbReference type="CDD" id="cd09909">
    <property type="entry name" value="HIV-1-like_HR1-HR2"/>
    <property type="match status" value="1"/>
</dbReference>
<dbReference type="FunFam" id="1.10.287.210:FF:000001">
    <property type="entry name" value="Envelope glycoprotein gp160"/>
    <property type="match status" value="1"/>
</dbReference>
<dbReference type="FunFam" id="1.20.5.490:FF:000001">
    <property type="entry name" value="Envelope glycoprotein gp160"/>
    <property type="match status" value="1"/>
</dbReference>
<dbReference type="FunFam" id="2.170.40.20:FF:000001">
    <property type="entry name" value="Envelope glycoprotein gp160"/>
    <property type="match status" value="1"/>
</dbReference>
<dbReference type="FunFam" id="2.170.40.20:FF:000003">
    <property type="entry name" value="Envelope glycoprotein gp160"/>
    <property type="match status" value="1"/>
</dbReference>
<dbReference type="Gene3D" id="1.10.287.210">
    <property type="match status" value="1"/>
</dbReference>
<dbReference type="Gene3D" id="2.170.40.20">
    <property type="entry name" value="Human immunodeficiency virus 1, Gp160, envelope glycoprotein"/>
    <property type="match status" value="2"/>
</dbReference>
<dbReference type="Gene3D" id="1.20.5.490">
    <property type="entry name" value="Single helix bin"/>
    <property type="match status" value="1"/>
</dbReference>
<dbReference type="HAMAP" id="MF_04083">
    <property type="entry name" value="HIV_ENV"/>
    <property type="match status" value="1"/>
</dbReference>
<dbReference type="InterPro" id="IPR036377">
    <property type="entry name" value="Gp120_core_sf"/>
</dbReference>
<dbReference type="InterPro" id="IPR037527">
    <property type="entry name" value="Gp160"/>
</dbReference>
<dbReference type="InterPro" id="IPR000328">
    <property type="entry name" value="GP41-like"/>
</dbReference>
<dbReference type="InterPro" id="IPR000777">
    <property type="entry name" value="HIV1_Gp120"/>
</dbReference>
<dbReference type="Pfam" id="PF00516">
    <property type="entry name" value="GP120"/>
    <property type="match status" value="1"/>
</dbReference>
<dbReference type="Pfam" id="PF00517">
    <property type="entry name" value="GP41"/>
    <property type="match status" value="1"/>
</dbReference>
<dbReference type="SUPFAM" id="SSF56502">
    <property type="entry name" value="gp120 core"/>
    <property type="match status" value="2"/>
</dbReference>
<dbReference type="SUPFAM" id="SSF58069">
    <property type="entry name" value="Virus ectodomain"/>
    <property type="match status" value="1"/>
</dbReference>
<comment type="function">
    <molecule>Envelope glycoprotein gp160</molecule>
    <text evidence="1">Oligomerizes in the host endoplasmic reticulum into predominantly trimers. In a second time, gp160 transits in the host Golgi, where glycosylation is completed. The precursor is then proteolytically cleaved in the trans-Golgi and thereby activated by cellular furin or furin-like proteases to produce gp120 and gp41.</text>
</comment>
<comment type="function">
    <molecule>Surface protein gp120</molecule>
    <text evidence="1">Attaches the virus to the host lymphoid cell by binding to the primary receptor CD4. This interaction induces a structural rearrangement creating a high affinity binding site for a chemokine coreceptor like CXCR4 and/or CCR5. Acts as a ligand for CD209/DC-SIGN and CLEC4M/DC-SIGNR, which are respectively found on dendritic cells (DCs), and on endothelial cells of liver sinusoids and lymph node sinuses. These interactions allow capture of viral particles at mucosal surfaces by these cells and subsequent transmission to permissive cells. HIV subverts the migration properties of dendritic cells to gain access to CD4+ T-cells in lymph nodes. Virus transmission to permissive T-cells occurs either in trans (without DCs infection, through viral capture and transmission), or in cis (following DCs productive infection, through the usual CD4-gp120 interaction), thereby inducing a robust infection. In trans infection, bound virions remain infectious over days and it is proposed that they are not degraded, but protected in non-lysosomal acidic organelles within the DCs close to the cell membrane thus contributing to the viral infectious potential during DCs' migration from the periphery to the lymphoid tissues. On arrival at lymphoid tissues, intact virions recycle back to DCs' cell surface allowing virus transmission to CD4+ T-cells.</text>
</comment>
<comment type="function">
    <molecule>Transmembrane protein gp41</molecule>
    <text evidence="1">Acts as a class I viral fusion protein. Under the current model, the protein has at least 3 conformational states: pre-fusion native state, pre-hairpin intermediate state, and post-fusion hairpin state. During fusion of viral and target intracellular membranes, the coiled coil regions (heptad repeats) assume a trimer-of-hairpins structure, positioning the fusion peptide in close proximity to the C-terminal region of the ectodomain. The formation of this structure appears to drive apposition and subsequent fusion of viral and target cell membranes. Complete fusion occurs in host cell endosomes and is dynamin-dependent, however some lipid transfer might occur at the plasma membrane. The virus undergoes clathrin-dependent internalization long before endosomal fusion, thus minimizing the surface exposure of conserved viral epitopes during fusion and reducing the efficacy of inhibitors targeting these epitopes. Membranes fusion leads to delivery of the nucleocapsid into the cytoplasm.</text>
</comment>
<comment type="subunit">
    <molecule>Surface protein gp120</molecule>
    <text evidence="1">The mature envelope protein (Env) consists of a homotrimer of non-covalently associated gp120-gp41 heterodimers. The resulting complex protrudes from the virus surface as a spike. There seems to be as few as 10 spikes on the average virion. Interacts with host CD4, CCR5 and CXCR4. Gp120 also interacts with the C-type lectins CD209/DC-SIGN and CLEC4M/DC-SIGNR (collectively referred to as DC-SIGN(R)). Gp120 and gp41 interact with GalCer. Gp120 interacts with host ITGA4/ITGB7 complex; on CD4+ T-cells, this interaction results in rapid activation of integrin ITGAL/LFA-1, which facilitates efficient cell-to-cell spreading of HIV-1. Gp120 interacts with cell-associated heparan sulfate; this interaction increases virus infectivity on permissive cells and may be involved in infection of CD4- cells.</text>
</comment>
<comment type="subunit">
    <molecule>Transmembrane protein gp41</molecule>
    <text evidence="1">The mature envelope protein (Env) consists of a homotrimer of non-covalently associated gp120-gp41 heterodimers. The resulting complex protrudes from the virus surface as a spike. There seems to be as few as 10 spikes on the average virion.</text>
</comment>
<comment type="subcellular location">
    <molecule>Surface protein gp120</molecule>
    <subcellularLocation>
        <location evidence="1">Virion membrane</location>
        <topology evidence="1">Peripheral membrane protein</topology>
    </subcellularLocation>
    <subcellularLocation>
        <location evidence="1">Host cell membrane</location>
        <topology evidence="1">Peripheral membrane protein</topology>
    </subcellularLocation>
    <subcellularLocation>
        <location evidence="1">Host endosome membrane</location>
        <topology evidence="1">Single-pass type I membrane protein</topology>
    </subcellularLocation>
    <text evidence="1">The surface protein is not anchored to the viral envelope, but associates with the extravirion surface through its binding to TM. It is probably concentrated at the site of budding and incorporated into the virions possibly by contacts between the cytoplasmic tail of Env and the N-terminus of Gag.</text>
</comment>
<comment type="subcellular location">
    <molecule>Transmembrane protein gp41</molecule>
    <subcellularLocation>
        <location evidence="1">Virion membrane</location>
        <topology evidence="1">Single-pass type I membrane protein</topology>
    </subcellularLocation>
    <subcellularLocation>
        <location evidence="1">Host cell membrane</location>
        <topology evidence="1">Single-pass type I membrane protein</topology>
    </subcellularLocation>
    <subcellularLocation>
        <location evidence="1">Host endosome membrane</location>
        <topology evidence="1">Single-pass type I membrane protein</topology>
    </subcellularLocation>
    <text evidence="1">It is probably concentrated at the site of budding and incorporated into the virions possibly by contacts between the cytoplasmic tail of Env and the N-terminus of Gag.</text>
</comment>
<comment type="domain">
    <text evidence="1">Some of the most genetically diverse regions of the viral genome are present in Env. They are called variable regions 1 through 5 (V1 through V5). Coreceptor usage of gp120 is determined mainly by the primary structure of the third variable region (V3) in the outer domain of gp120. The sequence of V3 determines which coreceptor, CCR5 and/or CXCR4 (corresponding to R5/macrophage, X4/T cell and R5X4/T cell and macrophage tropism), is used to trigger the fusion potential of the Env complex, and hence which cells the virus can infect. Binding to CCR5 involves a region adjacent in addition to V3.</text>
</comment>
<comment type="domain">
    <text evidence="1">The membrane proximal external region (MPER) present in gp41 is a tryptophan-rich region recognized by the antibodies 2F5, Z13, and 4E10. MPER seems to play a role in fusion.</text>
</comment>
<comment type="domain">
    <text evidence="1">The 17 amino acids long immunosuppressive region is present in many retroviral envelope proteins. Synthetic peptides derived from this relatively conserved sequence inhibit immune function in vitro and in vivo.</text>
</comment>
<comment type="domain">
    <text evidence="1">The YXXL motif is involved in determining the exact site of viral release at the surface of infected mononuclear cells and promotes endocytosis. YXXL and di-leucine endocytosis motifs interact directly or indirectly with the clathrin adapter complexes, opperate independently, and their activities are not additive.</text>
</comment>
<comment type="domain">
    <text evidence="1">The CD4-binding region is targeted by the antibody b12.</text>
</comment>
<comment type="PTM">
    <text evidence="1">Highly glycosylated by host. The high number of glycan on the protein is reffered to as 'glycan shield' because it contributes to hide protein sequence from adaptive immune system.</text>
</comment>
<comment type="PTM">
    <text evidence="1">Palmitoylation of the transmembrane protein and of Env polyprotein (prior to its proteolytic cleavage) is essential for their association with host cell membrane lipid rafts. Palmitoylation is therefore required for envelope trafficking to classical lipid rafts, but not for viral replication.</text>
</comment>
<comment type="PTM">
    <text evidence="1">Specific enzymatic cleavages in vivo yield mature proteins. Envelope glycoproteins are synthesized as an inactive precursor that is heavily N-glycosylated and processed likely by host cell furin in the Golgi to yield the mature SU and TM proteins. The cleavage site between SU and TM requires the minimal sequence [KR]-X-[KR]-R. About 2 of the 9 disulfide bonds of gp41 are reduced by P4HB/PDI, following binding to CD4 receptor.</text>
</comment>
<comment type="miscellaneous">
    <text evidence="1">Inhibitors targeting HIV-1 viral envelope proteins are used as antiretroviral drugs. Attachment of virions to the cell surface via non-specific interactions and CD4 binding can be blocked by inhibitors that include cyanovirin-N, cyclotriazadisulfonamide analogs, PRO 2000, TNX 355 and PRO 542. In addition, BMS 806 can block CD4-induced conformational changes. Env interactions with the coreceptor molecules can be targeted by CCR5 antagonists including SCH-D, maraviroc (UK 427857) and aplaviroc (GW 873140), and the CXCR4 antagonist AMD 070. Fusion of viral and cellular membranes can be inhibited by peptides such as enfuvirtide and tifuvirtide (T 1249). Resistance to inhibitors associated with mutations in Env are observed. Most of the time, single mutations confer only a modest reduction in drug susceptibility. Combination of several mutations is usually required to develop a high-level drug resistance.</text>
</comment>
<comment type="miscellaneous">
    <text evidence="1">HIV-1 lineages are divided in three main groups, M (for Major), O (for Outlier), and N (for New, or Non-M, Non-O). The vast majority of strains found worldwide belong to the group M. Group O seems to be endemic to and largely confined to Cameroon and neighboring countries in West Central Africa, where these viruses represent a small minority of HIV-1 strains. The group N is represented by a limited number of isolates from Cameroonian persons. The group M is further subdivided in 9 clades or subtypes (A to D, F to H, J and K).</text>
</comment>
<comment type="similarity">
    <text evidence="1">Belongs to the HIV-1 env protein family.</text>
</comment>
<comment type="sequence caution">
    <conflict type="erroneous initiation">
        <sequence resource="EMBL-CDS" id="CAB59009"/>
    </conflict>
</comment>
<comment type="online information" name="hivdb">
    <link uri="https://hivdb.stanford.edu"/>
    <text>HIV drug resistance database</text>
</comment>
<comment type="online information" name="HIV drug resistance mutations">
    <link uri="https://www.iasusa.org/hiv-drug-resistance/hiv-drug-resistance-mutations/"/>
</comment>
<evidence type="ECO:0000255" key="1">
    <source>
        <dbReference type="HAMAP-Rule" id="MF_04083"/>
    </source>
</evidence>
<evidence type="ECO:0000256" key="2">
    <source>
        <dbReference type="SAM" id="MobiDB-lite"/>
    </source>
</evidence>
<protein>
    <recommendedName>
        <fullName evidence="1">Envelope glycoprotein gp160</fullName>
    </recommendedName>
    <alternativeName>
        <fullName evidence="1">Env polyprotein</fullName>
    </alternativeName>
    <component>
        <recommendedName>
            <fullName evidence="1">Surface protein gp120</fullName>
            <shortName evidence="1">SU</shortName>
        </recommendedName>
        <alternativeName>
            <fullName evidence="1">Glycoprotein 120</fullName>
            <shortName evidence="1">gp120</shortName>
        </alternativeName>
    </component>
    <component>
        <recommendedName>
            <fullName evidence="1">Transmembrane protein gp41</fullName>
            <shortName evidence="1">TM</shortName>
        </recommendedName>
        <alternativeName>
            <fullName evidence="1">Glycoprotein 41</fullName>
            <shortName evidence="1">gp41</shortName>
        </alternativeName>
    </component>
</protein>
<organismHost>
    <name type="scientific">Homo sapiens</name>
    <name type="common">Human</name>
    <dbReference type="NCBI Taxonomy" id="9606"/>
</organismHost>
<sequence length="851" mass="96273">MRAREIQRNWQHLGKRGILFLGILIICSAANNLWVTVYYGVPVWKEATTTLFCASDAKAYETEVHNVWATHACVPTDPNPQEVVLENVTENFNMWKNNMVEQMHTDIISLWDESLKPCVKLTPLCVTLTCTNVTNNRTNANKNDTNINATVTSTDEIKNCSFNITTELKDKKKRVSALFYKLDIVQIKQSEINQSESEDRLINCNTSTVTQACPKVSFEPIPIHYCAPAGFAILKCNNNTCNGTGPCTNVSTVQCTHGIKPVVSTQLLLNGSLAEEEIIIRSEDITKNTKNIIVQLNEAVEINCTRPSNNTRKSIHIGPGRAFYATGDIIGDIRQAHCNISGGQWNKTVNQVKKELGKHFNKTIIFQPSSGGDPQVTRHIFNCRGEFSYCDTTDTVDDTEEEEDTTITIPCRIKQIINMWQKVGQAIYAPPTAGNITCRSNITGMILTRDGGNDNNTRTEETFRPGGGDMRDNWRSELYKYKVVQIEPLGIAPTRARRRVVQREKRAVGIGALFLGFLGAAGSTMGAASITLTVQARQLLSGIVQQQNNLLRAIEAQQQMLQLTVWGIKQLRARVLAVERYLRDQQLLGIWGCSGKLICTTNVPWNSSWSNKSQSEIWENMTWMQWEKEISNHTSTIYRLIEESQIQQEKNEQDLLALDKWASLWNWFDISNWLWYIKIFIMIVGGLIGLRIVFTVLSVVNRVRQGYSPLSFQTLTPSPRGPDRPEGIEEGGGEQDKDRSVRLVSGFLALAWDDLRNLCLFSYRHLRDLVLIATRILDRGLKGSWEALKYLWNLILYWGQEIKNSAINLLNTTAIAVAEGTDRIIEIVYRAFRALLHIPRRIRQGFERLLL</sequence>
<proteinExistence type="inferred from homology"/>
<name>ENV_HV197</name>
<feature type="signal peptide" evidence="1">
    <location>
        <begin position="1"/>
        <end position="31"/>
    </location>
</feature>
<feature type="chain" id="PRO_0000244666" description="Envelope glycoprotein gp160" evidence="1">
    <location>
        <begin position="32"/>
        <end position="851"/>
    </location>
</feature>
<feature type="chain" id="PRO_0000244667" description="Surface protein gp120" evidence="1">
    <location>
        <begin position="32"/>
        <end position="506"/>
    </location>
</feature>
<feature type="chain" id="PRO_0000244668" description="Transmembrane protein gp41" evidence="1">
    <location>
        <begin position="507"/>
        <end position="851"/>
    </location>
</feature>
<feature type="topological domain" description="Extracellular" evidence="1">
    <location>
        <begin position="32"/>
        <end position="679"/>
    </location>
</feature>
<feature type="transmembrane region" description="Helical" evidence="1">
    <location>
        <begin position="680"/>
        <end position="700"/>
    </location>
</feature>
<feature type="topological domain" description="Cytoplasmic" evidence="1">
    <location>
        <begin position="701"/>
        <end position="851"/>
    </location>
</feature>
<feature type="region of interest" description="V1" evidence="1">
    <location>
        <begin position="130"/>
        <end position="159"/>
    </location>
</feature>
<feature type="region of interest" description="V2" evidence="1">
    <location>
        <begin position="160"/>
        <end position="204"/>
    </location>
</feature>
<feature type="region of interest" description="V3" evidence="1">
    <location>
        <begin position="304"/>
        <end position="337"/>
    </location>
</feature>
<feature type="region of interest" description="CD4-binding loop" evidence="1">
    <location>
        <begin position="369"/>
        <end position="379"/>
    </location>
</feature>
<feature type="region of interest" description="V4" evidence="1">
    <location>
        <begin position="390"/>
        <end position="411"/>
    </location>
</feature>
<feature type="region of interest" description="Disordered" evidence="2">
    <location>
        <begin position="449"/>
        <end position="469"/>
    </location>
</feature>
<feature type="region of interest" description="V5">
    <location>
        <begin position="454"/>
        <end position="466"/>
    </location>
</feature>
<feature type="region of interest" description="V5" evidence="1">
    <location>
        <begin position="456"/>
        <end position="466"/>
    </location>
</feature>
<feature type="region of interest" description="Fusion peptide" evidence="1">
    <location>
        <begin position="507"/>
        <end position="527"/>
    </location>
</feature>
<feature type="region of interest" description="Immunosuppression" evidence="1">
    <location>
        <begin position="569"/>
        <end position="587"/>
    </location>
</feature>
<feature type="region of interest" description="MPER; binding to GalCer" evidence="1">
    <location>
        <begin position="657"/>
        <end position="678"/>
    </location>
</feature>
<feature type="region of interest" description="Disordered" evidence="2">
    <location>
        <begin position="713"/>
        <end position="737"/>
    </location>
</feature>
<feature type="coiled-coil region" evidence="1">
    <location>
        <begin position="628"/>
        <end position="662"/>
    </location>
</feature>
<feature type="short sequence motif" description="YXXL motif; contains endocytosis signal" evidence="1">
    <location>
        <begin position="707"/>
        <end position="710"/>
    </location>
</feature>
<feature type="short sequence motif" description="Di-leucine internalization motif" evidence="1">
    <location>
        <begin position="850"/>
        <end position="851"/>
    </location>
</feature>
<feature type="compositionally biased region" description="Basic and acidic residues" evidence="2">
    <location>
        <begin position="457"/>
        <end position="469"/>
    </location>
</feature>
<feature type="site" description="Cleavage; by host furin" evidence="1">
    <location>
        <begin position="506"/>
        <end position="507"/>
    </location>
</feature>
<feature type="lipid moiety-binding region" description="S-palmitoyl cysteine; by host" evidence="1">
    <location>
        <position position="759"/>
    </location>
</feature>
<feature type="glycosylation site" description="N-linked (GlcNAc...) asparagine; by host" evidence="1">
    <location>
        <position position="87"/>
    </location>
</feature>
<feature type="glycosylation site" description="N-linked (GlcNAc...) asparagine; by host" evidence="1">
    <location>
        <position position="132"/>
    </location>
</feature>
<feature type="glycosylation site" description="N-linked (GlcNAc...) asparagine; by host" evidence="1">
    <location>
        <position position="136"/>
    </location>
</feature>
<feature type="glycosylation site" description="N-linked (GlcNAc...) asparagine; by host" evidence="1">
    <location>
        <position position="143"/>
    </location>
</feature>
<feature type="glycosylation site" description="N-linked (GlcNAc...) asparagine; by host" evidence="1">
    <location>
        <position position="148"/>
    </location>
</feature>
<feature type="glycosylation site" description="N-linked (GlcNAc...) asparagine; by host" evidence="1">
    <location>
        <position position="159"/>
    </location>
</feature>
<feature type="glycosylation site" description="N-linked (GlcNAc...) asparagine; by host" evidence="1">
    <location>
        <position position="163"/>
    </location>
</feature>
<feature type="glycosylation site" description="N-linked (GlcNAc...) asparagine; by host" evidence="1">
    <location>
        <position position="193"/>
    </location>
</feature>
<feature type="glycosylation site" description="N-linked (GlcNAc...) asparagine; by host" evidence="1">
    <location>
        <position position="205"/>
    </location>
</feature>
<feature type="glycosylation site" description="N-linked (GlcNAc...) asparagine; by host" evidence="1">
    <location>
        <position position="238"/>
    </location>
</feature>
<feature type="glycosylation site" description="N-linked (GlcNAc...) asparagine; by host" evidence="1">
    <location>
        <position position="242"/>
    </location>
</feature>
<feature type="glycosylation site" description="N-linked (GlcNAc...) asparagine; by host" evidence="1">
    <location>
        <position position="249"/>
    </location>
</feature>
<feature type="glycosylation site" description="N-linked (GlcNAc...) asparagine; by host" evidence="1">
    <location>
        <position position="270"/>
    </location>
</feature>
<feature type="glycosylation site" description="N-linked (GlcNAc...) asparagine; by host" evidence="1">
    <location>
        <position position="303"/>
    </location>
</feature>
<feature type="glycosylation site" description="N-linked (GlcNAc...) asparagine; by host" evidence="1">
    <location>
        <position position="309"/>
    </location>
</feature>
<feature type="glycosylation site" description="N-linked (GlcNAc...) asparagine; by host" evidence="1">
    <location>
        <position position="339"/>
    </location>
</feature>
<feature type="glycosylation site" description="N-linked (GlcNAc...) asparagine; by host" evidence="1">
    <location>
        <position position="346"/>
    </location>
</feature>
<feature type="glycosylation site" description="N-linked (GlcNAc...) asparagine; by host" evidence="1">
    <location>
        <position position="361"/>
    </location>
</feature>
<feature type="glycosylation site" description="N-linked (GlcNAc...) asparagine; by host" evidence="1">
    <location>
        <position position="435"/>
    </location>
</feature>
<feature type="glycosylation site" description="N-linked (GlcNAc...) asparagine; by host" evidence="1">
    <location>
        <position position="441"/>
    </location>
</feature>
<feature type="glycosylation site" description="N-linked (GlcNAc...) asparagine; by host" evidence="1">
    <location>
        <position position="455"/>
    </location>
</feature>
<feature type="glycosylation site" description="N-linked (GlcNAc...) asparagine; by host" evidence="1">
    <location>
        <position position="606"/>
    </location>
</feature>
<feature type="glycosylation site" description="N-linked (GlcNAc...) asparagine; by host" evidence="1">
    <location>
        <position position="611"/>
    </location>
</feature>
<feature type="glycosylation site" description="N-linked (GlcNAc...) asparagine; by host" evidence="1">
    <location>
        <position position="620"/>
    </location>
</feature>
<feature type="glycosylation site" description="N-linked (GlcNAc...) asparagine; by host" evidence="1">
    <location>
        <position position="632"/>
    </location>
</feature>
<feature type="disulfide bond" evidence="1">
    <location>
        <begin position="53"/>
        <end position="73"/>
    </location>
</feature>
<feature type="disulfide bond" evidence="1">
    <location>
        <begin position="118"/>
        <end position="213"/>
    </location>
</feature>
<feature type="disulfide bond" evidence="1">
    <location>
        <begin position="125"/>
        <end position="204"/>
    </location>
</feature>
<feature type="disulfide bond" evidence="1">
    <location>
        <begin position="130"/>
        <end position="160"/>
    </location>
</feature>
<feature type="disulfide bond" evidence="1">
    <location>
        <begin position="226"/>
        <end position="255"/>
    </location>
</feature>
<feature type="disulfide bond" evidence="1">
    <location>
        <begin position="236"/>
        <end position="247"/>
    </location>
</feature>
<feature type="disulfide bond" evidence="1">
    <location>
        <begin position="304"/>
        <end position="338"/>
    </location>
</feature>
<feature type="disulfide bond" evidence="1">
    <location>
        <begin position="383"/>
        <end position="438"/>
    </location>
</feature>
<feature type="disulfide bond" evidence="1">
    <location>
        <begin position="390"/>
        <end position="411"/>
    </location>
</feature>
<feature type="disulfide bond" evidence="1">
    <location>
        <begin position="593"/>
        <end position="599"/>
    </location>
</feature>
<reference key="1">
    <citation type="journal article" date="2000" name="AIDS Res. Hum. Retroviruses">
        <title>Near-full-length genome sequencing of divergent African HIV type 1 subtype F viruses leads to the identification of a new HIV type 1 subtype designated K.</title>
        <authorList>
            <person name="Triques K."/>
            <person name="Bourgeois A."/>
            <person name="Vidale N."/>
            <person name="Mpoudi-Ngole E."/>
            <person name="Mulanga-Kabeya C."/>
            <person name="Nzilambi N."/>
            <person name="Torimiro N."/>
            <person name="Saman E."/>
            <person name="Delaporte E."/>
            <person name="Peeters M."/>
        </authorList>
    </citation>
    <scope>NUCLEOTIDE SEQUENCE [GENOMIC RNA]</scope>
</reference>
<reference key="2">
    <citation type="journal article" date="2003" name="APMIS">
        <title>Pathogens target DC-SIGN to influence their fate DC-SIGN functions as a pathogen receptor with broad specificity.</title>
        <authorList>
            <person name="Geijtenbeek T.B."/>
            <person name="van Kooyk Y."/>
        </authorList>
    </citation>
    <scope>REVIEW</scope>
</reference>
<reference key="3">
    <citation type="journal article" date="2003" name="Biochim. Biophys. Acta">
        <title>The HIV Env-mediated fusion reaction.</title>
        <authorList>
            <person name="Gallo S.A."/>
            <person name="Finnegan C.M."/>
            <person name="Viard M."/>
            <person name="Raviv Y."/>
            <person name="Dimitrov A."/>
            <person name="Rawat S.S."/>
            <person name="Puri A."/>
            <person name="Durell S."/>
            <person name="Blumenthal R."/>
        </authorList>
    </citation>
    <scope>REVIEW</scope>
</reference>
<reference key="4">
    <citation type="journal article" date="2005" name="Cell Death Differ.">
        <title>Mechanisms of apoptosis induction by the HIV-1 envelope.</title>
        <authorList>
            <person name="Perfettini J.-L."/>
            <person name="Castedo M."/>
            <person name="Roumier T."/>
            <person name="Andreau K."/>
            <person name="Nardacci R."/>
            <person name="Piacentini M."/>
            <person name="Kroemer G."/>
        </authorList>
    </citation>
    <scope>REVIEW</scope>
</reference>
<reference key="5">
    <citation type="journal article" date="2005" name="AIDS Res. Hum. Retroviruses">
        <title>V3: HIV's switch-hitter.</title>
        <authorList>
            <person name="Hartley O."/>
            <person name="Klasse P.J."/>
            <person name="Sattentau Q.J."/>
            <person name="Moore J.P."/>
        </authorList>
    </citation>
    <scope>REVIEW</scope>
</reference>
<reference key="6">
    <citation type="journal article" date="2005" name="Drugs">
        <title>Emerging drug targets for antiretroviral therapy.</title>
        <authorList>
            <person name="Reeves J.D."/>
            <person name="Piefer A.J."/>
        </authorList>
    </citation>
    <scope>REVIEW</scope>
</reference>
<reference key="7">
    <citation type="journal article" date="2006" name="EMBO J.">
        <title>HIV and the chemokine system: 10 years later.</title>
        <authorList>
            <person name="Lusso P."/>
        </authorList>
    </citation>
    <scope>REVIEW</scope>
</reference>
<keyword id="KW-0014">AIDS</keyword>
<keyword id="KW-0053">Apoptosis</keyword>
<keyword id="KW-1165">Clathrin-mediated endocytosis of virus by host</keyword>
<keyword id="KW-0165">Cleavage on pair of basic residues</keyword>
<keyword id="KW-0175">Coiled coil</keyword>
<keyword id="KW-1015">Disulfide bond</keyword>
<keyword id="KW-1170">Fusion of virus membrane with host endosomal membrane</keyword>
<keyword id="KW-1168">Fusion of virus membrane with host membrane</keyword>
<keyword id="KW-0325">Glycoprotein</keyword>
<keyword id="KW-1032">Host cell membrane</keyword>
<keyword id="KW-1039">Host endosome</keyword>
<keyword id="KW-1043">Host membrane</keyword>
<keyword id="KW-0945">Host-virus interaction</keyword>
<keyword id="KW-0449">Lipoprotein</keyword>
<keyword id="KW-0472">Membrane</keyword>
<keyword id="KW-0564">Palmitate</keyword>
<keyword id="KW-0732">Signal</keyword>
<keyword id="KW-0812">Transmembrane</keyword>
<keyword id="KW-1133">Transmembrane helix</keyword>
<keyword id="KW-1161">Viral attachment to host cell</keyword>
<keyword id="KW-0261">Viral envelope protein</keyword>
<keyword id="KW-0899">Viral immunoevasion</keyword>
<keyword id="KW-1162">Viral penetration into host cytoplasm</keyword>
<keyword id="KW-0946">Virion</keyword>
<keyword id="KW-1164">Virus endocytosis by host</keyword>
<keyword id="KW-1160">Virus entry into host cell</keyword>
<organism>
    <name type="scientific">Human immunodeficiency virus type 1 group M subtype K (isolate 97ZR-EQTB11)</name>
    <name type="common">HIV-1</name>
    <dbReference type="NCBI Taxonomy" id="388907"/>
    <lineage>
        <taxon>Viruses</taxon>
        <taxon>Riboviria</taxon>
        <taxon>Pararnavirae</taxon>
        <taxon>Artverviricota</taxon>
        <taxon>Revtraviricetes</taxon>
        <taxon>Ortervirales</taxon>
        <taxon>Retroviridae</taxon>
        <taxon>Orthoretrovirinae</taxon>
        <taxon>Lentivirus</taxon>
        <taxon>Human immunodeficiency virus type 1</taxon>
    </lineage>
</organism>
<accession>Q9QBZ8</accession>
<gene>
    <name evidence="1" type="primary">env</name>
</gene>